<comment type="function">
    <text evidence="3">Converts stearoyl-ACP to oleoyl-ACP by introduction of a cis double bond between carbons 9 and 10 of the acyl chain.</text>
</comment>
<comment type="catalytic activity">
    <reaction evidence="3">
        <text>octadecanoyl-[ACP] + 2 reduced [2Fe-2S]-[ferredoxin] + O2 + 2 H(+) = (9Z)-octadecenoyl-[ACP] + 2 oxidized [2Fe-2S]-[ferredoxin] + 2 H2O</text>
        <dbReference type="Rhea" id="RHEA:11776"/>
        <dbReference type="Rhea" id="RHEA-COMP:9656"/>
        <dbReference type="Rhea" id="RHEA-COMP:9924"/>
        <dbReference type="Rhea" id="RHEA-COMP:10000"/>
        <dbReference type="Rhea" id="RHEA-COMP:10001"/>
        <dbReference type="ChEBI" id="CHEBI:15377"/>
        <dbReference type="ChEBI" id="CHEBI:15378"/>
        <dbReference type="ChEBI" id="CHEBI:15379"/>
        <dbReference type="ChEBI" id="CHEBI:33737"/>
        <dbReference type="ChEBI" id="CHEBI:33738"/>
        <dbReference type="ChEBI" id="CHEBI:78495"/>
        <dbReference type="ChEBI" id="CHEBI:78783"/>
        <dbReference type="EC" id="1.14.19.2"/>
    </reaction>
</comment>
<comment type="cofactor">
    <cofactor evidence="1">
        <name>Fe(2+)</name>
        <dbReference type="ChEBI" id="CHEBI:29033"/>
    </cofactor>
    <text evidence="1">Binds 2 Fe(2+) ions per subunit.</text>
</comment>
<comment type="pathway">
    <text>Lipid metabolism; fatty acid metabolism.</text>
</comment>
<comment type="subunit">
    <text evidence="1">Homodimer.</text>
</comment>
<comment type="subcellular location">
    <subcellularLocation>
        <location evidence="5">Plastid</location>
        <location evidence="5">Chloroplast</location>
    </subcellularLocation>
</comment>
<comment type="tissue specificity">
    <text evidence="3">Ubiquitously expressed.</text>
</comment>
<comment type="induction">
    <text evidence="4">Positively regulated by LEC1.</text>
</comment>
<comment type="disruption phenotype">
    <text evidence="3">No visible phenotype.</text>
</comment>
<comment type="similarity">
    <text evidence="5">Belongs to the fatty acid desaturase type 2 family.</text>
</comment>
<protein>
    <recommendedName>
        <fullName>Stearoyl-[acyl-carrier-protein] 9-desaturase 1, chloroplastic</fullName>
        <shortName>Stearoyl-ACP desaturase 1</shortName>
        <ecNumber evidence="3">1.14.19.2</ecNumber>
    </recommendedName>
    <alternativeName>
        <fullName>Acyl-[acyl-carrier-protein] desaturase 1</fullName>
    </alternativeName>
</protein>
<keyword id="KW-0150">Chloroplast</keyword>
<keyword id="KW-0275">Fatty acid biosynthesis</keyword>
<keyword id="KW-0276">Fatty acid metabolism</keyword>
<keyword id="KW-0408">Iron</keyword>
<keyword id="KW-0444">Lipid biosynthesis</keyword>
<keyword id="KW-0443">Lipid metabolism</keyword>
<keyword id="KW-0479">Metal-binding</keyword>
<keyword id="KW-0560">Oxidoreductase</keyword>
<keyword id="KW-0934">Plastid</keyword>
<keyword id="KW-1185">Reference proteome</keyword>
<keyword id="KW-0809">Transit peptide</keyword>
<organism>
    <name type="scientific">Arabidopsis thaliana</name>
    <name type="common">Mouse-ear cress</name>
    <dbReference type="NCBI Taxonomy" id="3702"/>
    <lineage>
        <taxon>Eukaryota</taxon>
        <taxon>Viridiplantae</taxon>
        <taxon>Streptophyta</taxon>
        <taxon>Embryophyta</taxon>
        <taxon>Tracheophyta</taxon>
        <taxon>Spermatophyta</taxon>
        <taxon>Magnoliopsida</taxon>
        <taxon>eudicotyledons</taxon>
        <taxon>Gunneridae</taxon>
        <taxon>Pentapetalae</taxon>
        <taxon>rosids</taxon>
        <taxon>malvids</taxon>
        <taxon>Brassicales</taxon>
        <taxon>Brassicaceae</taxon>
        <taxon>Camelineae</taxon>
        <taxon>Arabidopsis</taxon>
    </lineage>
</organism>
<gene>
    <name type="primary">S-ACP-DES1</name>
    <name type="synonym">AAD1</name>
    <name type="synonym">SAD1</name>
    <name type="ordered locus">At5g16240</name>
    <name type="ORF">T21H19_160</name>
</gene>
<dbReference type="EC" id="1.14.19.2" evidence="3"/>
<dbReference type="EMBL" id="AL391148">
    <property type="protein sequence ID" value="CAC01865.1"/>
    <property type="molecule type" value="Genomic_DNA"/>
</dbReference>
<dbReference type="EMBL" id="CP002688">
    <property type="protein sequence ID" value="AED92264.1"/>
    <property type="molecule type" value="Genomic_DNA"/>
</dbReference>
<dbReference type="EMBL" id="AY056428">
    <property type="protein sequence ID" value="AAL08284.1"/>
    <property type="molecule type" value="mRNA"/>
</dbReference>
<dbReference type="EMBL" id="AY090324">
    <property type="protein sequence ID" value="AAL90985.1"/>
    <property type="molecule type" value="mRNA"/>
</dbReference>
<dbReference type="EMBL" id="AY088096">
    <property type="protein sequence ID" value="AAM65642.1"/>
    <property type="molecule type" value="mRNA"/>
</dbReference>
<dbReference type="PIR" id="T51494">
    <property type="entry name" value="T51494"/>
</dbReference>
<dbReference type="RefSeq" id="NP_197128.1">
    <property type="nucleotide sequence ID" value="NM_121629.3"/>
</dbReference>
<dbReference type="SMR" id="Q9LF04"/>
<dbReference type="BioGRID" id="16760">
    <property type="interactions" value="8"/>
</dbReference>
<dbReference type="FunCoup" id="Q9LF04">
    <property type="interactions" value="72"/>
</dbReference>
<dbReference type="STRING" id="3702.Q9LF04"/>
<dbReference type="GlyGen" id="Q9LF04">
    <property type="glycosylation" value="1 site"/>
</dbReference>
<dbReference type="PaxDb" id="3702-AT5G16240.1"/>
<dbReference type="ProteomicsDB" id="228263"/>
<dbReference type="EnsemblPlants" id="AT5G16240.1">
    <property type="protein sequence ID" value="AT5G16240.1"/>
    <property type="gene ID" value="AT5G16240"/>
</dbReference>
<dbReference type="GeneID" id="831484"/>
<dbReference type="Gramene" id="AT5G16240.1">
    <property type="protein sequence ID" value="AT5G16240.1"/>
    <property type="gene ID" value="AT5G16240"/>
</dbReference>
<dbReference type="KEGG" id="ath:AT5G16240"/>
<dbReference type="Araport" id="AT5G16240"/>
<dbReference type="TAIR" id="AT5G16240">
    <property type="gene designation" value="AAD1"/>
</dbReference>
<dbReference type="eggNOG" id="ENOG502QRJK">
    <property type="taxonomic scope" value="Eukaryota"/>
</dbReference>
<dbReference type="HOGENOM" id="CLU_034505_1_0_1"/>
<dbReference type="InParanoid" id="Q9LF04"/>
<dbReference type="OMA" id="HEHAYTK"/>
<dbReference type="PhylomeDB" id="Q9LF04"/>
<dbReference type="BRENDA" id="1.14.19.2">
    <property type="organism ID" value="399"/>
</dbReference>
<dbReference type="UniPathway" id="UPA00199"/>
<dbReference type="PRO" id="PR:Q9LF04"/>
<dbReference type="Proteomes" id="UP000006548">
    <property type="component" value="Chromosome 5"/>
</dbReference>
<dbReference type="ExpressionAtlas" id="Q9LF04">
    <property type="expression patterns" value="baseline and differential"/>
</dbReference>
<dbReference type="GO" id="GO:0009507">
    <property type="term" value="C:chloroplast"/>
    <property type="evidence" value="ECO:0007669"/>
    <property type="project" value="UniProtKB-SubCell"/>
</dbReference>
<dbReference type="GO" id="GO:0046872">
    <property type="term" value="F:metal ion binding"/>
    <property type="evidence" value="ECO:0007669"/>
    <property type="project" value="UniProtKB-KW"/>
</dbReference>
<dbReference type="GO" id="GO:0045300">
    <property type="term" value="F:stearoyl-[ACP] desaturase activity"/>
    <property type="evidence" value="ECO:0000315"/>
    <property type="project" value="TAIR"/>
</dbReference>
<dbReference type="GO" id="GO:0006633">
    <property type="term" value="P:fatty acid biosynthetic process"/>
    <property type="evidence" value="ECO:0007669"/>
    <property type="project" value="UniProtKB-KW"/>
</dbReference>
<dbReference type="CDD" id="cd01050">
    <property type="entry name" value="Acyl_ACP_Desat"/>
    <property type="match status" value="1"/>
</dbReference>
<dbReference type="FunFam" id="1.10.620.20:FF:000002">
    <property type="entry name" value="Stearoyl-[acyl-carrier-protein] 9-desaturase, chloroplastic"/>
    <property type="match status" value="1"/>
</dbReference>
<dbReference type="Gene3D" id="1.10.620.20">
    <property type="entry name" value="Ribonucleotide Reductase, subunit A"/>
    <property type="match status" value="1"/>
</dbReference>
<dbReference type="InterPro" id="IPR005067">
    <property type="entry name" value="Fatty_acid_desaturase-2"/>
</dbReference>
<dbReference type="InterPro" id="IPR009078">
    <property type="entry name" value="Ferritin-like_SF"/>
</dbReference>
<dbReference type="InterPro" id="IPR012348">
    <property type="entry name" value="RNR-like"/>
</dbReference>
<dbReference type="PANTHER" id="PTHR31155">
    <property type="entry name" value="ACYL- ACYL-CARRIER-PROTEIN DESATURASE-RELATED"/>
    <property type="match status" value="1"/>
</dbReference>
<dbReference type="PANTHER" id="PTHR31155:SF20">
    <property type="entry name" value="STEAROYL-[ACYL-CARRIER-PROTEIN] 9-DESATURASE 1, CHLOROPLASTIC"/>
    <property type="match status" value="1"/>
</dbReference>
<dbReference type="Pfam" id="PF03405">
    <property type="entry name" value="FA_desaturase_2"/>
    <property type="match status" value="1"/>
</dbReference>
<dbReference type="PIRSF" id="PIRSF000346">
    <property type="entry name" value="Dlt9_acylACP_des"/>
    <property type="match status" value="1"/>
</dbReference>
<dbReference type="SUPFAM" id="SSF47240">
    <property type="entry name" value="Ferritin-like"/>
    <property type="match status" value="1"/>
</dbReference>
<name>STAD1_ARATH</name>
<evidence type="ECO:0000250" key="1">
    <source>
        <dbReference type="UniProtKB" id="P22337"/>
    </source>
</evidence>
<evidence type="ECO:0000255" key="2"/>
<evidence type="ECO:0000269" key="3">
    <source>
    </source>
</evidence>
<evidence type="ECO:0000269" key="4">
    <source>
    </source>
</evidence>
<evidence type="ECO:0000305" key="5"/>
<accession>Q9LF04</accession>
<accession>Q8LA10</accession>
<sequence>MVMAMDRIALFSSSSSVYHHGSSHSHGSKSSRVFTIRSDSTAVGRKLYIPPREVHLQVKYSMPPQKLEIFKSLEGWANDNLLAYLKPVEKSWQPTDFLPEPESEGFYDQVKELRERCKELSDDYLIVLVGDMITEEALPTYQTMINTLDGVRDETGASPTPWAVWTRAWTAEENRHGDLLNKYLYLSGRVDMRQIEKTIQYLIGSGMDPKTENNPYLGFIYTSFQERATFISHGNTARLAKDLGDLTLGKICGTIAADERRHEHAYTKIVEKLFEIDPDTTVVGFADMMRKKISMPAHLMYDGRDDNLFDHFSSVAQRLGVYTAKDYADILQHLVERWNVEKLSDLSSEGNRAQDYLCGLPARIRKLEERAQGRTKEAAKNIPFSWIFGREVRA</sequence>
<reference key="1">
    <citation type="journal article" date="2000" name="Nature">
        <title>Sequence and analysis of chromosome 5 of the plant Arabidopsis thaliana.</title>
        <authorList>
            <person name="Tabata S."/>
            <person name="Kaneko T."/>
            <person name="Nakamura Y."/>
            <person name="Kotani H."/>
            <person name="Kato T."/>
            <person name="Asamizu E."/>
            <person name="Miyajima N."/>
            <person name="Sasamoto S."/>
            <person name="Kimura T."/>
            <person name="Hosouchi T."/>
            <person name="Kawashima K."/>
            <person name="Kohara M."/>
            <person name="Matsumoto M."/>
            <person name="Matsuno A."/>
            <person name="Muraki A."/>
            <person name="Nakayama S."/>
            <person name="Nakazaki N."/>
            <person name="Naruo K."/>
            <person name="Okumura S."/>
            <person name="Shinpo S."/>
            <person name="Takeuchi C."/>
            <person name="Wada T."/>
            <person name="Watanabe A."/>
            <person name="Yamada M."/>
            <person name="Yasuda M."/>
            <person name="Sato S."/>
            <person name="de la Bastide M."/>
            <person name="Huang E."/>
            <person name="Spiegel L."/>
            <person name="Gnoj L."/>
            <person name="O'Shaughnessy A."/>
            <person name="Preston R."/>
            <person name="Habermann K."/>
            <person name="Murray J."/>
            <person name="Johnson D."/>
            <person name="Rohlfing T."/>
            <person name="Nelson J."/>
            <person name="Stoneking T."/>
            <person name="Pepin K."/>
            <person name="Spieth J."/>
            <person name="Sekhon M."/>
            <person name="Armstrong J."/>
            <person name="Becker M."/>
            <person name="Belter E."/>
            <person name="Cordum H."/>
            <person name="Cordes M."/>
            <person name="Courtney L."/>
            <person name="Courtney W."/>
            <person name="Dante M."/>
            <person name="Du H."/>
            <person name="Edwards J."/>
            <person name="Fryman J."/>
            <person name="Haakensen B."/>
            <person name="Lamar E."/>
            <person name="Latreille P."/>
            <person name="Leonard S."/>
            <person name="Meyer R."/>
            <person name="Mulvaney E."/>
            <person name="Ozersky P."/>
            <person name="Riley A."/>
            <person name="Strowmatt C."/>
            <person name="Wagner-McPherson C."/>
            <person name="Wollam A."/>
            <person name="Yoakum M."/>
            <person name="Bell M."/>
            <person name="Dedhia N."/>
            <person name="Parnell L."/>
            <person name="Shah R."/>
            <person name="Rodriguez M."/>
            <person name="Hoon See L."/>
            <person name="Vil D."/>
            <person name="Baker J."/>
            <person name="Kirchoff K."/>
            <person name="Toth K."/>
            <person name="King L."/>
            <person name="Bahret A."/>
            <person name="Miller B."/>
            <person name="Marra M.A."/>
            <person name="Martienssen R."/>
            <person name="McCombie W.R."/>
            <person name="Wilson R.K."/>
            <person name="Murphy G."/>
            <person name="Bancroft I."/>
            <person name="Volckaert G."/>
            <person name="Wambutt R."/>
            <person name="Duesterhoeft A."/>
            <person name="Stiekema W."/>
            <person name="Pohl T."/>
            <person name="Entian K.-D."/>
            <person name="Terryn N."/>
            <person name="Hartley N."/>
            <person name="Bent E."/>
            <person name="Johnson S."/>
            <person name="Langham S.-A."/>
            <person name="McCullagh B."/>
            <person name="Robben J."/>
            <person name="Grymonprez B."/>
            <person name="Zimmermann W."/>
            <person name="Ramsperger U."/>
            <person name="Wedler H."/>
            <person name="Balke K."/>
            <person name="Wedler E."/>
            <person name="Peters S."/>
            <person name="van Staveren M."/>
            <person name="Dirkse W."/>
            <person name="Mooijman P."/>
            <person name="Klein Lankhorst R."/>
            <person name="Weitzenegger T."/>
            <person name="Bothe G."/>
            <person name="Rose M."/>
            <person name="Hauf J."/>
            <person name="Berneiser S."/>
            <person name="Hempel S."/>
            <person name="Feldpausch M."/>
            <person name="Lamberth S."/>
            <person name="Villarroel R."/>
            <person name="Gielen J."/>
            <person name="Ardiles W."/>
            <person name="Bents O."/>
            <person name="Lemcke K."/>
            <person name="Kolesov G."/>
            <person name="Mayer K.F.X."/>
            <person name="Rudd S."/>
            <person name="Schoof H."/>
            <person name="Schueller C."/>
            <person name="Zaccaria P."/>
            <person name="Mewes H.-W."/>
            <person name="Bevan M."/>
            <person name="Fransz P.F."/>
        </authorList>
    </citation>
    <scope>NUCLEOTIDE SEQUENCE [LARGE SCALE GENOMIC DNA]</scope>
    <source>
        <strain>cv. Columbia</strain>
    </source>
</reference>
<reference key="2">
    <citation type="journal article" date="2017" name="Plant J.">
        <title>Araport11: a complete reannotation of the Arabidopsis thaliana reference genome.</title>
        <authorList>
            <person name="Cheng C.Y."/>
            <person name="Krishnakumar V."/>
            <person name="Chan A.P."/>
            <person name="Thibaud-Nissen F."/>
            <person name="Schobel S."/>
            <person name="Town C.D."/>
        </authorList>
    </citation>
    <scope>GENOME REANNOTATION</scope>
    <source>
        <strain>cv. Columbia</strain>
    </source>
</reference>
<reference key="3">
    <citation type="journal article" date="2003" name="Science">
        <title>Empirical analysis of transcriptional activity in the Arabidopsis genome.</title>
        <authorList>
            <person name="Yamada K."/>
            <person name="Lim J."/>
            <person name="Dale J.M."/>
            <person name="Chen H."/>
            <person name="Shinn P."/>
            <person name="Palm C.J."/>
            <person name="Southwick A.M."/>
            <person name="Wu H.C."/>
            <person name="Kim C.J."/>
            <person name="Nguyen M."/>
            <person name="Pham P.K."/>
            <person name="Cheuk R.F."/>
            <person name="Karlin-Newmann G."/>
            <person name="Liu S.X."/>
            <person name="Lam B."/>
            <person name="Sakano H."/>
            <person name="Wu T."/>
            <person name="Yu G."/>
            <person name="Miranda M."/>
            <person name="Quach H.L."/>
            <person name="Tripp M."/>
            <person name="Chang C.H."/>
            <person name="Lee J.M."/>
            <person name="Toriumi M.J."/>
            <person name="Chan M.M."/>
            <person name="Tang C.C."/>
            <person name="Onodera C.S."/>
            <person name="Deng J.M."/>
            <person name="Akiyama K."/>
            <person name="Ansari Y."/>
            <person name="Arakawa T."/>
            <person name="Banh J."/>
            <person name="Banno F."/>
            <person name="Bowser L."/>
            <person name="Brooks S.Y."/>
            <person name="Carninci P."/>
            <person name="Chao Q."/>
            <person name="Choy N."/>
            <person name="Enju A."/>
            <person name="Goldsmith A.D."/>
            <person name="Gurjal M."/>
            <person name="Hansen N.F."/>
            <person name="Hayashizaki Y."/>
            <person name="Johnson-Hopson C."/>
            <person name="Hsuan V.W."/>
            <person name="Iida K."/>
            <person name="Karnes M."/>
            <person name="Khan S."/>
            <person name="Koesema E."/>
            <person name="Ishida J."/>
            <person name="Jiang P.X."/>
            <person name="Jones T."/>
            <person name="Kawai J."/>
            <person name="Kamiya A."/>
            <person name="Meyers C."/>
            <person name="Nakajima M."/>
            <person name="Narusaka M."/>
            <person name="Seki M."/>
            <person name="Sakurai T."/>
            <person name="Satou M."/>
            <person name="Tamse R."/>
            <person name="Vaysberg M."/>
            <person name="Wallender E.K."/>
            <person name="Wong C."/>
            <person name="Yamamura Y."/>
            <person name="Yuan S."/>
            <person name="Shinozaki K."/>
            <person name="Davis R.W."/>
            <person name="Theologis A."/>
            <person name="Ecker J.R."/>
        </authorList>
    </citation>
    <scope>NUCLEOTIDE SEQUENCE [LARGE SCALE MRNA]</scope>
    <source>
        <strain>cv. Columbia</strain>
    </source>
</reference>
<reference key="4">
    <citation type="submission" date="2002-03" db="EMBL/GenBank/DDBJ databases">
        <title>Full-length cDNA from Arabidopsis thaliana.</title>
        <authorList>
            <person name="Brover V.V."/>
            <person name="Troukhan M.E."/>
            <person name="Alexandrov N.A."/>
            <person name="Lu Y.-P."/>
            <person name="Flavell R.B."/>
            <person name="Feldmann K.A."/>
        </authorList>
    </citation>
    <scope>NUCLEOTIDE SEQUENCE [LARGE SCALE MRNA]</scope>
</reference>
<reference key="5">
    <citation type="journal article" date="2007" name="Plant Mol. Biol.">
        <title>The Arabidopsis stearoyl-acyl carrier protein-desaturase family and the contribution of leaf isoforms to oleic acid synthesis.</title>
        <authorList>
            <person name="Kachroo A."/>
            <person name="Shanklin J."/>
            <person name="Whittle E."/>
            <person name="Lapchyk L."/>
            <person name="Hildebrand D."/>
            <person name="Kachroo P."/>
        </authorList>
    </citation>
    <scope>GENE FAMILY</scope>
    <scope>FUNCTION</scope>
    <scope>CATALYTIC ACTIVITY</scope>
    <scope>DISRUPTION PHENOTYPE</scope>
    <scope>TISSUE SPECIFICITY</scope>
</reference>
<reference key="6">
    <citation type="journal article" date="2008" name="Plant Physiol.">
        <title>LEAFY COTYLEDON1 is a key regulator of fatty acid biosynthesis in Arabidopsis.</title>
        <authorList>
            <person name="Mu J."/>
            <person name="Tan H."/>
            <person name="Zheng Q."/>
            <person name="Fu F."/>
            <person name="Liang Y."/>
            <person name="Zhang J."/>
            <person name="Yang X."/>
            <person name="Wang T."/>
            <person name="Chong K."/>
            <person name="Wang X.J."/>
            <person name="Zuo J."/>
        </authorList>
    </citation>
    <scope>INDUCTION</scope>
</reference>
<proteinExistence type="evidence at protein level"/>
<feature type="transit peptide" description="Chloroplast" evidence="2">
    <location>
        <begin position="1"/>
        <end position="37"/>
    </location>
</feature>
<feature type="chain" id="PRO_0000401419" description="Stearoyl-[acyl-carrier-protein] 9-desaturase 1, chloroplastic">
    <location>
        <begin position="38"/>
        <end position="394"/>
    </location>
</feature>
<feature type="binding site" evidence="1">
    <location>
        <position position="135"/>
    </location>
    <ligand>
        <name>Fe cation</name>
        <dbReference type="ChEBI" id="CHEBI:24875"/>
        <label>1</label>
    </ligand>
</feature>
<feature type="binding site" evidence="1">
    <location>
        <position position="173"/>
    </location>
    <ligand>
        <name>Fe cation</name>
        <dbReference type="ChEBI" id="CHEBI:24875"/>
        <label>1</label>
    </ligand>
</feature>
<feature type="binding site" evidence="1">
    <location>
        <position position="173"/>
    </location>
    <ligand>
        <name>Fe cation</name>
        <dbReference type="ChEBI" id="CHEBI:24875"/>
        <label>2</label>
    </ligand>
</feature>
<feature type="binding site" evidence="1">
    <location>
        <position position="176"/>
    </location>
    <ligand>
        <name>Fe cation</name>
        <dbReference type="ChEBI" id="CHEBI:24875"/>
        <label>1</label>
    </ligand>
</feature>
<feature type="binding site" evidence="1">
    <location>
        <position position="226"/>
    </location>
    <ligand>
        <name>Fe cation</name>
        <dbReference type="ChEBI" id="CHEBI:24875"/>
        <label>2</label>
    </ligand>
</feature>
<feature type="binding site" evidence="1">
    <location>
        <position position="259"/>
    </location>
    <ligand>
        <name>Fe cation</name>
        <dbReference type="ChEBI" id="CHEBI:24875"/>
        <label>1</label>
    </ligand>
</feature>
<feature type="binding site" evidence="1">
    <location>
        <position position="259"/>
    </location>
    <ligand>
        <name>Fe cation</name>
        <dbReference type="ChEBI" id="CHEBI:24875"/>
        <label>2</label>
    </ligand>
</feature>
<feature type="binding site" evidence="1">
    <location>
        <position position="262"/>
    </location>
    <ligand>
        <name>Fe cation</name>
        <dbReference type="ChEBI" id="CHEBI:24875"/>
        <label>2</label>
    </ligand>
</feature>
<feature type="sequence conflict" description="In Ref. 4; AAM65642." evidence="5" ref="4">
    <original>VYHHG</original>
    <variation>SVYRHR</variation>
    <location>
        <begin position="17"/>
        <end position="21"/>
    </location>
</feature>
<feature type="sequence conflict" description="In Ref. 4; AAM65642." evidence="5" ref="4">
    <original>D</original>
    <variation>E</variation>
    <location>
        <position position="79"/>
    </location>
</feature>